<feature type="peptide" id="PRO_0000020493" description="Oxytocin">
    <location>
        <begin position="1"/>
        <end position="9"/>
    </location>
</feature>
<feature type="chain" id="PRO_0000020494" description="Neurophysin 1">
    <location>
        <begin position="13"/>
        <end position="105"/>
    </location>
</feature>
<feature type="modified residue" description="Glycine amide" evidence="3">
    <location>
        <position position="9"/>
    </location>
</feature>
<feature type="disulfide bond">
    <location>
        <begin position="1"/>
        <end position="6"/>
    </location>
</feature>
<feature type="disulfide bond" evidence="1">
    <location>
        <begin position="22"/>
        <end position="66"/>
    </location>
</feature>
<feature type="disulfide bond" evidence="1">
    <location>
        <begin position="25"/>
        <end position="39"/>
    </location>
</feature>
<feature type="disulfide bond" evidence="1">
    <location>
        <begin position="33"/>
        <end position="56"/>
    </location>
</feature>
<feature type="disulfide bond" evidence="1">
    <location>
        <begin position="40"/>
        <end position="46"/>
    </location>
</feature>
<feature type="disulfide bond" evidence="1">
    <location>
        <begin position="73"/>
        <end position="85"/>
    </location>
</feature>
<feature type="disulfide bond" evidence="1">
    <location>
        <begin position="79"/>
        <end position="97"/>
    </location>
</feature>
<feature type="disulfide bond" evidence="1">
    <location>
        <begin position="86"/>
        <end position="91"/>
    </location>
</feature>
<feature type="sequence conflict" description="In Ref. 2; AAC27491." evidence="4" ref="2">
    <original>G</original>
    <variation>A</variation>
    <location>
        <position position="26"/>
    </location>
</feature>
<feature type="non-terminal residue">
    <location>
        <position position="1"/>
    </location>
</feature>
<gene>
    <name type="primary">OXT</name>
</gene>
<sequence length="105" mass="10723">CYIQNCPLGGKRAALDLDVRKCLPCGPGGKGRCFGPSICCGDELGCFVGTAEALRCQEENYLPSPCQSGQKPCGSGGRCAAAGICCSPDGCLADPSCHDEAAFSQ</sequence>
<dbReference type="EMBL" id="AF076673">
    <property type="protein sequence ID" value="AAC27491.1"/>
    <property type="molecule type" value="mRNA"/>
</dbReference>
<dbReference type="PIR" id="A90735">
    <property type="entry name" value="NFHO1"/>
</dbReference>
<dbReference type="SMR" id="P01176"/>
<dbReference type="InParanoid" id="P01176"/>
<dbReference type="Proteomes" id="UP000002281">
    <property type="component" value="Unplaced"/>
</dbReference>
<dbReference type="GO" id="GO:0005615">
    <property type="term" value="C:extracellular space"/>
    <property type="evidence" value="ECO:0000250"/>
    <property type="project" value="AgBase"/>
</dbReference>
<dbReference type="GO" id="GO:0030141">
    <property type="term" value="C:secretory granule"/>
    <property type="evidence" value="ECO:0000318"/>
    <property type="project" value="GO_Central"/>
</dbReference>
<dbReference type="GO" id="GO:0005185">
    <property type="term" value="F:neurohypophyseal hormone activity"/>
    <property type="evidence" value="ECO:0007669"/>
    <property type="project" value="InterPro"/>
</dbReference>
<dbReference type="GO" id="GO:0005184">
    <property type="term" value="F:neuropeptide hormone activity"/>
    <property type="evidence" value="ECO:0000318"/>
    <property type="project" value="GO_Central"/>
</dbReference>
<dbReference type="GO" id="GO:0031855">
    <property type="term" value="F:oxytocin receptor binding"/>
    <property type="evidence" value="ECO:0000318"/>
    <property type="project" value="GO_Central"/>
</dbReference>
<dbReference type="GO" id="GO:0031894">
    <property type="term" value="F:V1A vasopressin receptor binding"/>
    <property type="evidence" value="ECO:0000318"/>
    <property type="project" value="GO_Central"/>
</dbReference>
<dbReference type="GO" id="GO:0043207">
    <property type="term" value="P:response to external biotic stimulus"/>
    <property type="evidence" value="ECO:0000250"/>
    <property type="project" value="AgBase"/>
</dbReference>
<dbReference type="GO" id="GO:0032094">
    <property type="term" value="P:response to food"/>
    <property type="evidence" value="ECO:0000250"/>
    <property type="project" value="AgBase"/>
</dbReference>
<dbReference type="GO" id="GO:0009612">
    <property type="term" value="P:response to mechanical stimulus"/>
    <property type="evidence" value="ECO:0000250"/>
    <property type="project" value="AgBase"/>
</dbReference>
<dbReference type="FunFam" id="2.60.9.10:FF:000001">
    <property type="entry name" value="oxytocin-neurophysin 1"/>
    <property type="match status" value="1"/>
</dbReference>
<dbReference type="Gene3D" id="2.60.9.10">
    <property type="entry name" value="Neurohypophysial hormone domain"/>
    <property type="match status" value="1"/>
</dbReference>
<dbReference type="InterPro" id="IPR000981">
    <property type="entry name" value="Neurhyp_horm"/>
</dbReference>
<dbReference type="InterPro" id="IPR036387">
    <property type="entry name" value="Neurhyp_horm_dom_sf"/>
</dbReference>
<dbReference type="InterPro" id="IPR022423">
    <property type="entry name" value="Neurohypophysial_hormone_CS"/>
</dbReference>
<dbReference type="PANTHER" id="PTHR11681">
    <property type="entry name" value="NEUROPHYSIN"/>
    <property type="match status" value="1"/>
</dbReference>
<dbReference type="PANTHER" id="PTHR11681:SF2">
    <property type="entry name" value="OXYTOCIN-NEUROPHYSIN 1"/>
    <property type="match status" value="1"/>
</dbReference>
<dbReference type="Pfam" id="PF00220">
    <property type="entry name" value="Hormone_4"/>
    <property type="match status" value="1"/>
</dbReference>
<dbReference type="Pfam" id="PF00184">
    <property type="entry name" value="Hormone_5"/>
    <property type="match status" value="1"/>
</dbReference>
<dbReference type="PIRSF" id="PIRSF001815">
    <property type="entry name" value="Nonapeptide_hormone_precursor"/>
    <property type="match status" value="1"/>
</dbReference>
<dbReference type="PRINTS" id="PR00831">
    <property type="entry name" value="NEUROPHYSIN"/>
</dbReference>
<dbReference type="SMART" id="SM00003">
    <property type="entry name" value="NH"/>
    <property type="match status" value="1"/>
</dbReference>
<dbReference type="SUPFAM" id="SSF49606">
    <property type="entry name" value="Neurophysin II"/>
    <property type="match status" value="1"/>
</dbReference>
<dbReference type="PROSITE" id="PS00264">
    <property type="entry name" value="NEUROHYPOPHYS_HORM"/>
    <property type="match status" value="1"/>
</dbReference>
<protein>
    <recommendedName>
        <fullName>Oxytocin-neurophysin 1</fullName>
        <shortName>OT-NPI</shortName>
    </recommendedName>
    <component>
        <recommendedName>
            <fullName>Oxytocin</fullName>
        </recommendedName>
        <alternativeName>
            <fullName>Ocytocin</fullName>
        </alternativeName>
    </component>
    <component>
        <recommendedName>
            <fullName>Neurophysin 1</fullName>
        </recommendedName>
    </component>
</protein>
<comment type="function">
    <text>Neurophysin 1 specifically binds oxytocin.</text>
</comment>
<comment type="function">
    <text evidence="2">Oxytocin causes contraction of the smooth muscle of the uterus and of the mammary gland. Acts by binding to oxytocin receptor (OXTR) (By similarity).</text>
</comment>
<comment type="subunit">
    <text evidence="2">Interacts with oxytocin receptor (Ki=1.5 nM) (By similarity). Interacts with vasopressin V1aR/AVPR1A (Ki=37 nM), V1bR/AVPR1B (Ki=222 nM), and V2R/AVPR2 receptors (Ki=823 nM) (By similarity).</text>
</comment>
<comment type="subcellular location">
    <subcellularLocation>
        <location>Secreted</location>
    </subcellularLocation>
</comment>
<comment type="miscellaneous">
    <text>'GKR' has been placed at positions 10-12 by homology with the complete sequence of the other precursors.</text>
</comment>
<comment type="similarity">
    <text evidence="4">Belongs to the vasopressin/oxytocin family.</text>
</comment>
<proteinExistence type="evidence at protein level"/>
<keyword id="KW-0027">Amidation</keyword>
<keyword id="KW-0165">Cleavage on pair of basic residues</keyword>
<keyword id="KW-0903">Direct protein sequencing</keyword>
<keyword id="KW-1015">Disulfide bond</keyword>
<keyword id="KW-0372">Hormone</keyword>
<keyword id="KW-1185">Reference proteome</keyword>
<keyword id="KW-0964">Secreted</keyword>
<reference key="1">
    <citation type="journal article" date="1958" name="Bull. Soc. Chim. Biol.">
        <title>Oxytocin and vasopressin from horses.</title>
        <authorList>
            <person name="Acher R."/>
            <person name="Chauvet J."/>
            <person name="Lenci M.T."/>
        </authorList>
    </citation>
    <scope>PROTEIN SEQUENCE OF 1-9</scope>
    <scope>AMIDATION AT GLY-9</scope>
</reference>
<reference key="2">
    <citation type="journal article" date="1999" name="Domest. Anim. Endocrinol.">
        <title>Oxytocin-neurophysin I mRNA abundance in equine uterine endometrium.</title>
        <authorList>
            <person name="Behrendt-Adam C.Y."/>
            <person name="Adams M.H."/>
            <person name="Simpson K.S."/>
            <person name="McDowell K.J."/>
        </authorList>
    </citation>
    <scope>NUCLEOTIDE SEQUENCE [MRNA] OF 6-69</scope>
</reference>
<reference key="3">
    <citation type="journal article" date="1981" name="Biochem. Biophys. Res. Commun.">
        <title>Identification of neurophysins: complete aminoacid sequence of horse VLDV-neurophysin.</title>
        <authorList>
            <person name="Chauvet M.-T."/>
            <person name="Chauvet J."/>
            <person name="Acher R."/>
        </authorList>
    </citation>
    <scope>PROTEIN SEQUENCE OF 13-105</scope>
</reference>
<evidence type="ECO:0000250" key="1">
    <source>
        <dbReference type="UniProtKB" id="P01175"/>
    </source>
</evidence>
<evidence type="ECO:0000250" key="2">
    <source>
        <dbReference type="UniProtKB" id="P01178"/>
    </source>
</evidence>
<evidence type="ECO:0000269" key="3">
    <source>
    </source>
</evidence>
<evidence type="ECO:0000305" key="4"/>
<name>NEU1_HORSE</name>
<organism>
    <name type="scientific">Equus caballus</name>
    <name type="common">Horse</name>
    <dbReference type="NCBI Taxonomy" id="9796"/>
    <lineage>
        <taxon>Eukaryota</taxon>
        <taxon>Metazoa</taxon>
        <taxon>Chordata</taxon>
        <taxon>Craniata</taxon>
        <taxon>Vertebrata</taxon>
        <taxon>Euteleostomi</taxon>
        <taxon>Mammalia</taxon>
        <taxon>Eutheria</taxon>
        <taxon>Laurasiatheria</taxon>
        <taxon>Perissodactyla</taxon>
        <taxon>Equidae</taxon>
        <taxon>Equus</taxon>
    </lineage>
</organism>
<accession>P01176</accession>
<accession>O77675</accession>